<dbReference type="EMBL" id="AY721594">
    <property type="protein sequence ID" value="AAU20764.1"/>
    <property type="molecule type" value="mRNA"/>
</dbReference>
<dbReference type="RefSeq" id="NP_001007815.1">
    <property type="nucleotide sequence ID" value="NM_001007814.2"/>
</dbReference>
<dbReference type="SMR" id="Q647I9"/>
<dbReference type="FunCoup" id="Q647I9">
    <property type="interactions" value="23"/>
</dbReference>
<dbReference type="STRING" id="9913.ENSBTAP00000017623"/>
<dbReference type="PaxDb" id="9913-ENSBTAP00000017623"/>
<dbReference type="GeneID" id="493717"/>
<dbReference type="KEGG" id="bta:493717"/>
<dbReference type="CTD" id="126206"/>
<dbReference type="eggNOG" id="ENOG502SBIG">
    <property type="taxonomic scope" value="Eukaryota"/>
</dbReference>
<dbReference type="InParanoid" id="Q647I9"/>
<dbReference type="OrthoDB" id="120976at2759"/>
<dbReference type="Proteomes" id="UP000009136">
    <property type="component" value="Unplaced"/>
</dbReference>
<dbReference type="GO" id="GO:0005938">
    <property type="term" value="C:cell cortex"/>
    <property type="evidence" value="ECO:0000314"/>
    <property type="project" value="AgBase"/>
</dbReference>
<dbReference type="GO" id="GO:0060473">
    <property type="term" value="C:cortical granule"/>
    <property type="evidence" value="ECO:0000250"/>
    <property type="project" value="UniProtKB"/>
</dbReference>
<dbReference type="GO" id="GO:0005737">
    <property type="term" value="C:cytoplasm"/>
    <property type="evidence" value="ECO:0000314"/>
    <property type="project" value="AgBase"/>
</dbReference>
<dbReference type="GO" id="GO:0140095">
    <property type="term" value="C:cytoplasmic lattice"/>
    <property type="evidence" value="ECO:0000250"/>
    <property type="project" value="UniProtKB"/>
</dbReference>
<dbReference type="GO" id="GO:0005829">
    <property type="term" value="C:cytosol"/>
    <property type="evidence" value="ECO:0000314"/>
    <property type="project" value="AgBase"/>
</dbReference>
<dbReference type="GO" id="GO:0042585">
    <property type="term" value="C:germinal vesicle"/>
    <property type="evidence" value="ECO:0000314"/>
    <property type="project" value="AgBase"/>
</dbReference>
<dbReference type="GO" id="GO:0005794">
    <property type="term" value="C:Golgi apparatus"/>
    <property type="evidence" value="ECO:0000250"/>
    <property type="project" value="UniProtKB"/>
</dbReference>
<dbReference type="GO" id="GO:0005739">
    <property type="term" value="C:mitochondrion"/>
    <property type="evidence" value="ECO:0000250"/>
    <property type="project" value="UniProtKB"/>
</dbReference>
<dbReference type="GO" id="GO:0005730">
    <property type="term" value="C:nucleolus"/>
    <property type="evidence" value="ECO:0007669"/>
    <property type="project" value="UniProtKB-SubCell"/>
</dbReference>
<dbReference type="GO" id="GO:0005634">
    <property type="term" value="C:nucleus"/>
    <property type="evidence" value="ECO:0000318"/>
    <property type="project" value="GO_Central"/>
</dbReference>
<dbReference type="GO" id="GO:0048471">
    <property type="term" value="C:perinuclear region of cytoplasm"/>
    <property type="evidence" value="ECO:0000314"/>
    <property type="project" value="AgBase"/>
</dbReference>
<dbReference type="GO" id="GO:0106333">
    <property type="term" value="C:subcortical maternal complex"/>
    <property type="evidence" value="ECO:0000318"/>
    <property type="project" value="GO_Central"/>
</dbReference>
<dbReference type="GO" id="GO:0005524">
    <property type="term" value="F:ATP binding"/>
    <property type="evidence" value="ECO:0007669"/>
    <property type="project" value="UniProtKB-KW"/>
</dbReference>
<dbReference type="GO" id="GO:0140094">
    <property type="term" value="F:structural constituent of cytoplasmic lattice"/>
    <property type="evidence" value="ECO:0000250"/>
    <property type="project" value="UniProtKB"/>
</dbReference>
<dbReference type="GO" id="GO:0007015">
    <property type="term" value="P:actin filament organization"/>
    <property type="evidence" value="ECO:0000250"/>
    <property type="project" value="UniProtKB"/>
</dbReference>
<dbReference type="GO" id="GO:0060471">
    <property type="term" value="P:cortical granule exocytosis"/>
    <property type="evidence" value="ECO:0000250"/>
    <property type="project" value="UniProtKB"/>
</dbReference>
<dbReference type="GO" id="GO:0051656">
    <property type="term" value="P:establishment of organelle localization"/>
    <property type="evidence" value="ECO:0000250"/>
    <property type="project" value="UniProtKB"/>
</dbReference>
<dbReference type="GO" id="GO:0051293">
    <property type="term" value="P:establishment of spindle localization"/>
    <property type="evidence" value="ECO:0000250"/>
    <property type="project" value="UniProtKB"/>
</dbReference>
<dbReference type="GO" id="GO:0006887">
    <property type="term" value="P:exocytosis"/>
    <property type="evidence" value="ECO:0000250"/>
    <property type="project" value="UniProtKB"/>
</dbReference>
<dbReference type="GO" id="GO:0040019">
    <property type="term" value="P:positive regulation of embryonic development"/>
    <property type="evidence" value="ECO:0000250"/>
    <property type="project" value="UniProtKB"/>
</dbReference>
<dbReference type="GO" id="GO:0140089">
    <property type="term" value="P:protein storage"/>
    <property type="evidence" value="ECO:0000250"/>
    <property type="project" value="UniProtKB"/>
</dbReference>
<dbReference type="GO" id="GO:0051302">
    <property type="term" value="P:regulation of cell division"/>
    <property type="evidence" value="ECO:0000250"/>
    <property type="project" value="UniProtKB"/>
</dbReference>
<dbReference type="GO" id="GO:0050727">
    <property type="term" value="P:regulation of inflammatory response"/>
    <property type="evidence" value="ECO:0000318"/>
    <property type="project" value="GO_Central"/>
</dbReference>
<dbReference type="GO" id="GO:0032880">
    <property type="term" value="P:regulation of protein localization"/>
    <property type="evidence" value="ECO:0000250"/>
    <property type="project" value="UniProtKB"/>
</dbReference>
<dbReference type="CDD" id="cd00116">
    <property type="entry name" value="LRR_RI"/>
    <property type="match status" value="1"/>
</dbReference>
<dbReference type="CDD" id="cd08320">
    <property type="entry name" value="Pyrin_NALPs"/>
    <property type="match status" value="1"/>
</dbReference>
<dbReference type="FunFam" id="3.40.50.300:FF:000442">
    <property type="entry name" value="NACHT, LRR and PYD domains-containing protein 3"/>
    <property type="match status" value="1"/>
</dbReference>
<dbReference type="FunFam" id="3.80.10.10:FF:000584">
    <property type="entry name" value="NACHT, LRR and PYD domains-containing protein 5"/>
    <property type="match status" value="1"/>
</dbReference>
<dbReference type="Gene3D" id="1.10.533.10">
    <property type="entry name" value="Death Domain, Fas"/>
    <property type="match status" value="1"/>
</dbReference>
<dbReference type="Gene3D" id="3.40.50.300">
    <property type="entry name" value="P-loop containing nucleotide triphosphate hydrolases"/>
    <property type="match status" value="1"/>
</dbReference>
<dbReference type="Gene3D" id="3.80.10.10">
    <property type="entry name" value="Ribonuclease Inhibitor"/>
    <property type="match status" value="1"/>
</dbReference>
<dbReference type="InterPro" id="IPR004020">
    <property type="entry name" value="DAPIN"/>
</dbReference>
<dbReference type="InterPro" id="IPR011029">
    <property type="entry name" value="DEATH-like_dom_sf"/>
</dbReference>
<dbReference type="InterPro" id="IPR001611">
    <property type="entry name" value="Leu-rich_rpt"/>
</dbReference>
<dbReference type="InterPro" id="IPR032675">
    <property type="entry name" value="LRR_dom_sf"/>
</dbReference>
<dbReference type="InterPro" id="IPR007111">
    <property type="entry name" value="NACHT_NTPase"/>
</dbReference>
<dbReference type="InterPro" id="IPR041267">
    <property type="entry name" value="NLRP_HD2"/>
</dbReference>
<dbReference type="InterPro" id="IPR050637">
    <property type="entry name" value="NLRP_innate_immun_reg"/>
</dbReference>
<dbReference type="InterPro" id="IPR041075">
    <property type="entry name" value="NOD1/2_WH"/>
</dbReference>
<dbReference type="InterPro" id="IPR027417">
    <property type="entry name" value="P-loop_NTPase"/>
</dbReference>
<dbReference type="PANTHER" id="PTHR45690">
    <property type="entry name" value="NACHT, LRR AND PYD DOMAINS-CONTAINING PROTEIN 12"/>
    <property type="match status" value="1"/>
</dbReference>
<dbReference type="PANTHER" id="PTHR45690:SF7">
    <property type="entry name" value="NACHT, LRR AND PYD DOMAINS-CONTAINING PROTEIN 5"/>
    <property type="match status" value="1"/>
</dbReference>
<dbReference type="Pfam" id="PF13516">
    <property type="entry name" value="LRR_6"/>
    <property type="match status" value="4"/>
</dbReference>
<dbReference type="Pfam" id="PF05729">
    <property type="entry name" value="NACHT"/>
    <property type="match status" value="1"/>
</dbReference>
<dbReference type="Pfam" id="PF17776">
    <property type="entry name" value="NLRC4_HD2"/>
    <property type="match status" value="1"/>
</dbReference>
<dbReference type="Pfam" id="PF17779">
    <property type="entry name" value="NOD2_WH"/>
    <property type="match status" value="1"/>
</dbReference>
<dbReference type="Pfam" id="PF02758">
    <property type="entry name" value="PYRIN"/>
    <property type="match status" value="1"/>
</dbReference>
<dbReference type="SMART" id="SM00368">
    <property type="entry name" value="LRR_RI"/>
    <property type="match status" value="12"/>
</dbReference>
<dbReference type="SMART" id="SM01289">
    <property type="entry name" value="PYRIN"/>
    <property type="match status" value="1"/>
</dbReference>
<dbReference type="SUPFAM" id="SSF47986">
    <property type="entry name" value="DEATH domain"/>
    <property type="match status" value="1"/>
</dbReference>
<dbReference type="SUPFAM" id="SSF52540">
    <property type="entry name" value="P-loop containing nucleoside triphosphate hydrolases"/>
    <property type="match status" value="1"/>
</dbReference>
<dbReference type="SUPFAM" id="SSF52047">
    <property type="entry name" value="RNI-like"/>
    <property type="match status" value="2"/>
</dbReference>
<dbReference type="PROSITE" id="PS50824">
    <property type="entry name" value="DAPIN"/>
    <property type="match status" value="1"/>
</dbReference>
<dbReference type="PROSITE" id="PS50837">
    <property type="entry name" value="NACHT"/>
    <property type="match status" value="1"/>
</dbReference>
<accession>Q647I9</accession>
<name>NALP5_BOVIN</name>
<keyword id="KW-0067">ATP-binding</keyword>
<keyword id="KW-0963">Cytoplasm</keyword>
<keyword id="KW-0968">Cytoplasmic vesicle</keyword>
<keyword id="KW-0333">Golgi apparatus</keyword>
<keyword id="KW-0433">Leucine-rich repeat</keyword>
<keyword id="KW-0496">Mitochondrion</keyword>
<keyword id="KW-0547">Nucleotide-binding</keyword>
<keyword id="KW-0539">Nucleus</keyword>
<keyword id="KW-1185">Reference proteome</keyword>
<keyword id="KW-0677">Repeat</keyword>
<sequence length="1098" mass="120994">MREAKIAPLSNYGLQWCFEQLGKEEFQTFKALLKEHASESAACSFPLVQVDRADAESLASLLHEHCRASLAWKTSTDIFEKMSLSALSEMARDEMKKYLLAEISEDSAPTKTDQGPSMKEVPGPREDPQDSRDYRIHVMTTFSTRLDTPQRFEEFASECPDAHALSGAFNPDPSGGFRPLTVVLHGPPGVGKSSLARRLLLFWAQGDLYKGLFSYVFLLRARDLQGSRETSFAELISKEWPDAPVPVEKVLSQPERLLIVVDGLEELELTFRDQDSSLLADWAERQPAPVLAHSLLKKVLLPECALLLTVQDAGLQRLQALLRSPRYLWVGGLSVENRMQLLLGGGKHCRRKTCAWHAGADHQEVLDKCQVPVVCALVREALELQGEPGKGLPVPGHTLTGLYATFVFQRLAPKDAGWRALSGEERGALKGLCRLAADGVWNAKFVFDGDDLGVHGLQGPELSALQQASILLPDGHCGRGHAFSHLSLQEFFAALFYVLRGVEGDGEGYPLFPQSTKSLTELRHIDLNVQLVQMKRFLFGLVSKEVMRALETLLGCPVRPVAKQQLLHWICLVGQHPAAAASPDLLEAFYCLFEAQDDEFVRLALNGFQEVWLQLNRPMDLTVSSFCLRRCQHLRKVRLDVRGTPKDEFAEAWSGAPQGLKIKTLDEHWEDLCSVLSTHPNLRQLDLSGSVLSKEAMKTLCVKLRQPACKIQNLIFKGARVTPGLRHLWMTLIINRNITRLDLTGCRLREEDVQTACEALRHPQCALESLRLDRCGLTPASCREISQVLATSGSLKSLSLTGNKVADQGVKSLCDALKVTPCTLQKLILGSCGLTAATCQDLASALIENQGLTHLSLSGDELGSKGMSLLCRAVKLSSCGLQKLALNACSLDVAGCGFLAFALMGNRHLTHLSLSMNPLEDPGMNLLCEVMMEPSCPLRDLDLVNCRLTASCCKSLSNVITRSPRLRSLDLAANALGDEGIAALCEGLKQKNTLTRLGLEACGLTSEGCKALSAALTCSRHLASLNLMRNDLGPRGMTTLCSAFMHPTSNLQTIGLWKEQYPARVRRLLEQVQRLKPHVVISDAWYTEEEEDGPCWRI</sequence>
<protein>
    <recommendedName>
        <fullName>NACHT, LRR and PYD domains-containing protein 5</fullName>
    </recommendedName>
    <alternativeName>
        <fullName>Mater protein homolog</fullName>
    </alternativeName>
</protein>
<feature type="chain" id="PRO_0000286969" description="NACHT, LRR and PYD domains-containing protein 5">
    <location>
        <begin position="1"/>
        <end position="1098"/>
    </location>
</feature>
<feature type="domain" description="Pyrin" evidence="3">
    <location>
        <begin position="1"/>
        <end position="97"/>
    </location>
</feature>
<feature type="domain" description="NACHT" evidence="4">
    <location>
        <begin position="180"/>
        <end position="503"/>
    </location>
</feature>
<feature type="repeat" description="LRR 1">
    <location>
        <begin position="851"/>
        <end position="871"/>
    </location>
</feature>
<feature type="repeat" description="LRR 2">
    <location>
        <begin position="880"/>
        <end position="900"/>
    </location>
</feature>
<feature type="repeat" description="LRR 3">
    <location>
        <begin position="908"/>
        <end position="928"/>
    </location>
</feature>
<feature type="repeat" description="LRR 4">
    <location>
        <begin position="937"/>
        <end position="958"/>
    </location>
</feature>
<feature type="repeat" description="LRR 5">
    <location>
        <begin position="965"/>
        <end position="985"/>
    </location>
</feature>
<feature type="repeat" description="LRR 6">
    <location>
        <begin position="993"/>
        <end position="1013"/>
    </location>
</feature>
<feature type="repeat" description="LRR 7">
    <location>
        <begin position="1021"/>
        <end position="1041"/>
    </location>
</feature>
<feature type="region of interest" description="Disordered" evidence="5">
    <location>
        <begin position="104"/>
        <end position="131"/>
    </location>
</feature>
<feature type="compositionally biased region" description="Basic and acidic residues" evidence="5">
    <location>
        <begin position="122"/>
        <end position="131"/>
    </location>
</feature>
<feature type="binding site" evidence="4">
    <location>
        <begin position="186"/>
        <end position="193"/>
    </location>
    <ligand>
        <name>ATP</name>
        <dbReference type="ChEBI" id="CHEBI:30616"/>
    </ligand>
</feature>
<comment type="function">
    <text evidence="2">Component of the subcortical maternal complex (SCMC), a multiprotein complex that plays a key role in early embryonic development. The SCMC complex is a structural constituent of cytoplasmic lattices, which consist in fibrous structures found in the cytoplasm of oocytes and preimplantation embryos. They are required to store maternal proteins critical for embryonic development, such as proteins that control epigenetic reprogramming of the preimplantation embryo, and prevent their degradation or activation. Required for the localization of cortical granules to the cortex of oocytes, via association with the cortical actin scaffold. Required for cortical actin clearance prior to oocyte exocytosis and prevention of polyspermy. Involved in regulating post-fertilization Ca(2+) release and endoplasmic reticulum storage (ER) storage via regulation of cellular localization. May be involved in the localization of mitochondria to the cytoplasm and perinuclear region in oocytes and early stage embryos, independent of its role in CPL formation.</text>
</comment>
<comment type="subunit">
    <text evidence="1 2">Component of the subcortical maternal complex (SCMC), at least composed of NLRP5, KHDC3, OOEP, and TLE6 (By similarity). Within the complex, interacts with OOEP, KHDC3 and TLE6 (By similarity). The SCMC may facilitate translocation of its components between the nuclear and cytoplasmic compartments (By similarity). As part of the SCMC interacts with the SCMC-associated protein ZBED3 (By similarity). As part of the SCMC interacts with the SCMC-associated protein CFL1/Cofilin-1 (By similarity). Interacts with PRKCE (By similarity). Interacts with TUBB3 at cytoskeleton microtubules (By similarity).</text>
</comment>
<comment type="subcellular location">
    <subcellularLocation>
        <location evidence="2">Cytoplasm</location>
    </subcellularLocation>
    <subcellularLocation>
        <location evidence="2">Cytoplasmic vesicle</location>
        <location evidence="2">Secretory vesicle</location>
        <location evidence="2">Cortical granule</location>
    </subcellularLocation>
    <subcellularLocation>
        <location evidence="2">Mitochondrion</location>
    </subcellularLocation>
    <subcellularLocation>
        <location evidence="2">Nucleus</location>
        <location evidence="2">Nucleolus</location>
    </subcellularLocation>
    <subcellularLocation>
        <location evidence="1">Golgi apparatus</location>
    </subcellularLocation>
    <text evidence="2">Core component of cytoplasmic lattices in oocytes. In the subcortical cytoplasm of early embryos from the 1-cell to the blastocyst stages. From the 2-cell stage, still detected in the subcortex, but excluded from cell-cell contact regions. Expression largely disappears in blastocysts. Located in mitochondria and nucleoli in primary follicle oocytes.</text>
</comment>
<comment type="tissue specificity">
    <text evidence="6 7">Oocyte-specific.</text>
</comment>
<comment type="PTM">
    <text evidence="1">Phosphorylated by PRKCE.</text>
</comment>
<comment type="similarity">
    <text evidence="8">Belongs to the NLRP family.</text>
</comment>
<organism>
    <name type="scientific">Bos taurus</name>
    <name type="common">Bovine</name>
    <dbReference type="NCBI Taxonomy" id="9913"/>
    <lineage>
        <taxon>Eukaryota</taxon>
        <taxon>Metazoa</taxon>
        <taxon>Chordata</taxon>
        <taxon>Craniata</taxon>
        <taxon>Vertebrata</taxon>
        <taxon>Euteleostomi</taxon>
        <taxon>Mammalia</taxon>
        <taxon>Eutheria</taxon>
        <taxon>Laurasiatheria</taxon>
        <taxon>Artiodactyla</taxon>
        <taxon>Ruminantia</taxon>
        <taxon>Pecora</taxon>
        <taxon>Bovidae</taxon>
        <taxon>Bovinae</taxon>
        <taxon>Bos</taxon>
    </lineage>
</organism>
<proteinExistence type="evidence at transcript level"/>
<gene>
    <name type="primary">NLRP5</name>
    <name type="synonym">MATER</name>
    <name type="synonym">NALP5</name>
</gene>
<evidence type="ECO:0000250" key="1">
    <source>
        <dbReference type="UniProtKB" id="P59047"/>
    </source>
</evidence>
<evidence type="ECO:0000250" key="2">
    <source>
        <dbReference type="UniProtKB" id="Q9R1M5"/>
    </source>
</evidence>
<evidence type="ECO:0000255" key="3">
    <source>
        <dbReference type="PROSITE-ProRule" id="PRU00061"/>
    </source>
</evidence>
<evidence type="ECO:0000255" key="4">
    <source>
        <dbReference type="PROSITE-ProRule" id="PRU00136"/>
    </source>
</evidence>
<evidence type="ECO:0000256" key="5">
    <source>
        <dbReference type="SAM" id="MobiDB-lite"/>
    </source>
</evidence>
<evidence type="ECO:0000269" key="6">
    <source>
    </source>
</evidence>
<evidence type="ECO:0000269" key="7">
    <source>
    </source>
</evidence>
<evidence type="ECO:0000305" key="8"/>
<reference key="1">
    <citation type="journal article" date="2004" name="Biol. Reprod.">
        <title>Spatio-temporal expression of the germ cell marker genes MATER, ZAR1, GDF9, BMP15, and VASA in adult bovine tissues, oocytes, and preimplantation embryos.</title>
        <authorList>
            <person name="Pennetier S."/>
            <person name="Uzbekova S."/>
            <person name="Perreau C."/>
            <person name="Papillier P."/>
            <person name="Mermillod P."/>
            <person name="Dalbies-Tran R."/>
        </authorList>
    </citation>
    <scope>NUCLEOTIDE SEQUENCE [MRNA]</scope>
    <scope>TISSUE SPECIFICITY</scope>
</reference>
<reference key="2">
    <citation type="journal article" date="2006" name="Biol. Reprod.">
        <title>Bovine NALP5, NALP8, and NALP9 genes: assignment to a QTL region and the expression in adult tissues, oocytes, and preimplantation embryos.</title>
        <authorList>
            <person name="Ponsuksili S."/>
            <person name="Brunner R.M."/>
            <person name="Goldammer T."/>
            <person name="Kuhn C."/>
            <person name="Walz C."/>
            <person name="Chomdej S."/>
            <person name="Tesfaye D."/>
            <person name="Schellander K."/>
            <person name="Wimmers K."/>
            <person name="Schwerin M."/>
        </authorList>
    </citation>
    <scope>TISSUE SPECIFICITY</scope>
    <source>
        <tissue>Oocyte</tissue>
    </source>
</reference>